<evidence type="ECO:0000255" key="1">
    <source>
        <dbReference type="HAMAP-Rule" id="MF_00121"/>
    </source>
</evidence>
<proteinExistence type="inferred from homology"/>
<feature type="chain" id="PRO_1000095247" description="Aspartyl/glutamyl-tRNA(Asn/Gln) amidotransferase subunit B">
    <location>
        <begin position="1"/>
        <end position="479"/>
    </location>
</feature>
<comment type="function">
    <text evidence="1">Allows the formation of correctly charged Asn-tRNA(Asn) or Gln-tRNA(Gln) through the transamidation of misacylated Asp-tRNA(Asn) or Glu-tRNA(Gln) in organisms which lack either or both of asparaginyl-tRNA or glutaminyl-tRNA synthetases. The reaction takes place in the presence of glutamine and ATP through an activated phospho-Asp-tRNA(Asn) or phospho-Glu-tRNA(Gln).</text>
</comment>
<comment type="catalytic activity">
    <reaction evidence="1">
        <text>L-glutamyl-tRNA(Gln) + L-glutamine + ATP + H2O = L-glutaminyl-tRNA(Gln) + L-glutamate + ADP + phosphate + H(+)</text>
        <dbReference type="Rhea" id="RHEA:17521"/>
        <dbReference type="Rhea" id="RHEA-COMP:9681"/>
        <dbReference type="Rhea" id="RHEA-COMP:9684"/>
        <dbReference type="ChEBI" id="CHEBI:15377"/>
        <dbReference type="ChEBI" id="CHEBI:15378"/>
        <dbReference type="ChEBI" id="CHEBI:29985"/>
        <dbReference type="ChEBI" id="CHEBI:30616"/>
        <dbReference type="ChEBI" id="CHEBI:43474"/>
        <dbReference type="ChEBI" id="CHEBI:58359"/>
        <dbReference type="ChEBI" id="CHEBI:78520"/>
        <dbReference type="ChEBI" id="CHEBI:78521"/>
        <dbReference type="ChEBI" id="CHEBI:456216"/>
    </reaction>
</comment>
<comment type="catalytic activity">
    <reaction evidence="1">
        <text>L-aspartyl-tRNA(Asn) + L-glutamine + ATP + H2O = L-asparaginyl-tRNA(Asn) + L-glutamate + ADP + phosphate + 2 H(+)</text>
        <dbReference type="Rhea" id="RHEA:14513"/>
        <dbReference type="Rhea" id="RHEA-COMP:9674"/>
        <dbReference type="Rhea" id="RHEA-COMP:9677"/>
        <dbReference type="ChEBI" id="CHEBI:15377"/>
        <dbReference type="ChEBI" id="CHEBI:15378"/>
        <dbReference type="ChEBI" id="CHEBI:29985"/>
        <dbReference type="ChEBI" id="CHEBI:30616"/>
        <dbReference type="ChEBI" id="CHEBI:43474"/>
        <dbReference type="ChEBI" id="CHEBI:58359"/>
        <dbReference type="ChEBI" id="CHEBI:78515"/>
        <dbReference type="ChEBI" id="CHEBI:78516"/>
        <dbReference type="ChEBI" id="CHEBI:456216"/>
    </reaction>
</comment>
<comment type="subunit">
    <text evidence="1">Heterotrimer of A, B and C subunits.</text>
</comment>
<comment type="similarity">
    <text evidence="1">Belongs to the GatB/GatE family. GatB subfamily.</text>
</comment>
<keyword id="KW-0067">ATP-binding</keyword>
<keyword id="KW-0436">Ligase</keyword>
<keyword id="KW-0547">Nucleotide-binding</keyword>
<keyword id="KW-0648">Protein biosynthesis</keyword>
<protein>
    <recommendedName>
        <fullName evidence="1">Aspartyl/glutamyl-tRNA(Asn/Gln) amidotransferase subunit B</fullName>
        <shortName evidence="1">Asp/Glu-ADT subunit B</shortName>
        <ecNumber evidence="1">6.3.5.-</ecNumber>
    </recommendedName>
</protein>
<gene>
    <name evidence="1" type="primary">gatB</name>
    <name type="ordered locus">Spy49_1382c</name>
</gene>
<organism>
    <name type="scientific">Streptococcus pyogenes serotype M49 (strain NZ131)</name>
    <dbReference type="NCBI Taxonomy" id="471876"/>
    <lineage>
        <taxon>Bacteria</taxon>
        <taxon>Bacillati</taxon>
        <taxon>Bacillota</taxon>
        <taxon>Bacilli</taxon>
        <taxon>Lactobacillales</taxon>
        <taxon>Streptococcaceae</taxon>
        <taxon>Streptococcus</taxon>
    </lineage>
</organism>
<dbReference type="EC" id="6.3.5.-" evidence="1"/>
<dbReference type="EMBL" id="CP000829">
    <property type="protein sequence ID" value="ACI61660.1"/>
    <property type="molecule type" value="Genomic_DNA"/>
</dbReference>
<dbReference type="SMR" id="B5XHZ8"/>
<dbReference type="KEGG" id="soz:Spy49_1382c"/>
<dbReference type="HOGENOM" id="CLU_019240_0_0_9"/>
<dbReference type="Proteomes" id="UP000001039">
    <property type="component" value="Chromosome"/>
</dbReference>
<dbReference type="GO" id="GO:0050566">
    <property type="term" value="F:asparaginyl-tRNA synthase (glutamine-hydrolyzing) activity"/>
    <property type="evidence" value="ECO:0007669"/>
    <property type="project" value="RHEA"/>
</dbReference>
<dbReference type="GO" id="GO:0005524">
    <property type="term" value="F:ATP binding"/>
    <property type="evidence" value="ECO:0007669"/>
    <property type="project" value="UniProtKB-KW"/>
</dbReference>
<dbReference type="GO" id="GO:0050567">
    <property type="term" value="F:glutaminyl-tRNA synthase (glutamine-hydrolyzing) activity"/>
    <property type="evidence" value="ECO:0007669"/>
    <property type="project" value="UniProtKB-UniRule"/>
</dbReference>
<dbReference type="GO" id="GO:0070681">
    <property type="term" value="P:glutaminyl-tRNAGln biosynthesis via transamidation"/>
    <property type="evidence" value="ECO:0007669"/>
    <property type="project" value="TreeGrafter"/>
</dbReference>
<dbReference type="GO" id="GO:0006412">
    <property type="term" value="P:translation"/>
    <property type="evidence" value="ECO:0007669"/>
    <property type="project" value="UniProtKB-UniRule"/>
</dbReference>
<dbReference type="FunFam" id="1.10.10.410:FF:000001">
    <property type="entry name" value="Aspartyl/glutamyl-tRNA(Asn/Gln) amidotransferase subunit B"/>
    <property type="match status" value="1"/>
</dbReference>
<dbReference type="FunFam" id="1.10.150.380:FF:000001">
    <property type="entry name" value="Aspartyl/glutamyl-tRNA(Asn/Gln) amidotransferase subunit B"/>
    <property type="match status" value="1"/>
</dbReference>
<dbReference type="Gene3D" id="1.10.10.410">
    <property type="match status" value="1"/>
</dbReference>
<dbReference type="Gene3D" id="1.10.150.380">
    <property type="entry name" value="GatB domain, N-terminal subdomain"/>
    <property type="match status" value="1"/>
</dbReference>
<dbReference type="HAMAP" id="MF_00121">
    <property type="entry name" value="GatB"/>
    <property type="match status" value="1"/>
</dbReference>
<dbReference type="InterPro" id="IPR017959">
    <property type="entry name" value="Asn/Gln-tRNA_amidoTrfase_suB/E"/>
</dbReference>
<dbReference type="InterPro" id="IPR006075">
    <property type="entry name" value="Asn/Gln-tRNA_Trfase_suB/E_cat"/>
</dbReference>
<dbReference type="InterPro" id="IPR018027">
    <property type="entry name" value="Asn/Gln_amidotransferase"/>
</dbReference>
<dbReference type="InterPro" id="IPR003789">
    <property type="entry name" value="Asn/Gln_tRNA_amidoTrase-B-like"/>
</dbReference>
<dbReference type="InterPro" id="IPR004413">
    <property type="entry name" value="GatB"/>
</dbReference>
<dbReference type="InterPro" id="IPR042114">
    <property type="entry name" value="GatB_C_1"/>
</dbReference>
<dbReference type="InterPro" id="IPR023168">
    <property type="entry name" value="GatB_Yqey_C_2"/>
</dbReference>
<dbReference type="InterPro" id="IPR017958">
    <property type="entry name" value="Gln-tRNA_amidoTrfase_suB_CS"/>
</dbReference>
<dbReference type="InterPro" id="IPR014746">
    <property type="entry name" value="Gln_synth/guanido_kin_cat_dom"/>
</dbReference>
<dbReference type="NCBIfam" id="TIGR00133">
    <property type="entry name" value="gatB"/>
    <property type="match status" value="1"/>
</dbReference>
<dbReference type="NCBIfam" id="NF004011">
    <property type="entry name" value="PRK05477.1-1"/>
    <property type="match status" value="1"/>
</dbReference>
<dbReference type="NCBIfam" id="NF004012">
    <property type="entry name" value="PRK05477.1-2"/>
    <property type="match status" value="1"/>
</dbReference>
<dbReference type="NCBIfam" id="NF004014">
    <property type="entry name" value="PRK05477.1-4"/>
    <property type="match status" value="1"/>
</dbReference>
<dbReference type="PANTHER" id="PTHR11659">
    <property type="entry name" value="GLUTAMYL-TRNA GLN AMIDOTRANSFERASE SUBUNIT B MITOCHONDRIAL AND PROKARYOTIC PET112-RELATED"/>
    <property type="match status" value="1"/>
</dbReference>
<dbReference type="PANTHER" id="PTHR11659:SF0">
    <property type="entry name" value="GLUTAMYL-TRNA(GLN) AMIDOTRANSFERASE SUBUNIT B, MITOCHONDRIAL"/>
    <property type="match status" value="1"/>
</dbReference>
<dbReference type="Pfam" id="PF02934">
    <property type="entry name" value="GatB_N"/>
    <property type="match status" value="1"/>
</dbReference>
<dbReference type="Pfam" id="PF02637">
    <property type="entry name" value="GatB_Yqey"/>
    <property type="match status" value="1"/>
</dbReference>
<dbReference type="SMART" id="SM00845">
    <property type="entry name" value="GatB_Yqey"/>
    <property type="match status" value="1"/>
</dbReference>
<dbReference type="SUPFAM" id="SSF89095">
    <property type="entry name" value="GatB/YqeY motif"/>
    <property type="match status" value="1"/>
</dbReference>
<dbReference type="SUPFAM" id="SSF55931">
    <property type="entry name" value="Glutamine synthetase/guanido kinase"/>
    <property type="match status" value="1"/>
</dbReference>
<dbReference type="PROSITE" id="PS01234">
    <property type="entry name" value="GATB"/>
    <property type="match status" value="1"/>
</dbReference>
<accession>B5XHZ8</accession>
<sequence>MNFETIIGLEVHVELNTNSKIFSPSSAHFGEDPNANTNVIDWSFPGVLPVMNKGVIDAGIKAALALNMDIHKEMHFDRKNYFYPDNPKAYQISQFDEPIGYNGWIDIKLEDGSTKKIRIERAHLEEDAGKNTHGTDGYSYVDLNRQGVPLIEIVSEADMRSPEEAYAYLTALKEIIQYTGISDVKMEEGSMRVDANISLRPYGQEQFGTKTELKNLNSFSNVRKGLEFEVERQAKLLRSGGAIRQETRRYDEANKGTILMRVKEGAADYRYFPEPDLPLYEIDDAWIDEMRAQLPQFPAQRRAKYEEELGLSAYDASQLTATKALSDFFETAVSLGGDAKQVSNWLQGEVAQFLNAEGKTIEEIALTPENLVEMIAIIADGTISSKMAKKVFVHLAKNGGSARAYVEKAGLVQISDPAVLVPIIHQVFADNEAAVADFKSGKRNADKAFTGFLMKATKGQANPQVAQQLLAQELQKLRD</sequence>
<name>GATB_STRPZ</name>
<reference key="1">
    <citation type="journal article" date="2008" name="J. Bacteriol.">
        <title>Genome sequence of a nephritogenic and highly transformable M49 strain of Streptococcus pyogenes.</title>
        <authorList>
            <person name="McShan W.M."/>
            <person name="Ferretti J.J."/>
            <person name="Karasawa T."/>
            <person name="Suvorov A.N."/>
            <person name="Lin S."/>
            <person name="Qin B."/>
            <person name="Jia H."/>
            <person name="Kenton S."/>
            <person name="Najar F."/>
            <person name="Wu H."/>
            <person name="Scott J."/>
            <person name="Roe B.A."/>
            <person name="Savic D.J."/>
        </authorList>
    </citation>
    <scope>NUCLEOTIDE SEQUENCE [LARGE SCALE GENOMIC DNA]</scope>
    <source>
        <strain>NZ131</strain>
    </source>
</reference>